<evidence type="ECO:0000255" key="1">
    <source>
        <dbReference type="HAMAP-Rule" id="MF_00197"/>
    </source>
</evidence>
<sequence length="283" mass="30594">MKIKFTKMHGAGNDFVVIDAINQSIHFTPAQWQHLADRRFGVGADQMLVVEKPQAAGVDFRYRIYNADGGEVEQCGNGARAFVKFVTDKKLTDKQAIRVETMSGVIEPRLEANGQITVDMGAPILTPEDVPFDVSGLLCKAEGADTLWPLDIKGETHWISVLSMGNPHAVQVVADADHAPVREDGVLIEHHPRFPKRVNAGFMQIIDPHQIKLRVFERGAGETLACGTGACAAVVSGIRRGLLASPIKVQTRGGELSIAWAGDNSPVLLTGPAVTVFEGEIEL</sequence>
<protein>
    <recommendedName>
        <fullName evidence="1">Diaminopimelate epimerase</fullName>
        <shortName evidence="1">DAP epimerase</shortName>
        <ecNumber evidence="1">5.1.1.7</ecNumber>
    </recommendedName>
    <alternativeName>
        <fullName evidence="1">PLP-independent amino acid racemase</fullName>
    </alternativeName>
</protein>
<comment type="function">
    <text evidence="1">Catalyzes the stereoinversion of LL-2,6-diaminopimelate (L,L-DAP) to meso-diaminopimelate (meso-DAP), a precursor of L-lysine and an essential component of the bacterial peptidoglycan.</text>
</comment>
<comment type="catalytic activity">
    <reaction evidence="1">
        <text>(2S,6S)-2,6-diaminopimelate = meso-2,6-diaminopimelate</text>
        <dbReference type="Rhea" id="RHEA:15393"/>
        <dbReference type="ChEBI" id="CHEBI:57609"/>
        <dbReference type="ChEBI" id="CHEBI:57791"/>
        <dbReference type="EC" id="5.1.1.7"/>
    </reaction>
</comment>
<comment type="pathway">
    <text evidence="1">Amino-acid biosynthesis; L-lysine biosynthesis via DAP pathway; DL-2,6-diaminopimelate from LL-2,6-diaminopimelate: step 1/1.</text>
</comment>
<comment type="subunit">
    <text evidence="1">Homodimer.</text>
</comment>
<comment type="subcellular location">
    <subcellularLocation>
        <location evidence="1">Cytoplasm</location>
    </subcellularLocation>
</comment>
<comment type="similarity">
    <text evidence="1">Belongs to the diaminopimelate epimerase family.</text>
</comment>
<feature type="chain" id="PRO_1000099242" description="Diaminopimelate epimerase">
    <location>
        <begin position="1"/>
        <end position="283"/>
    </location>
</feature>
<feature type="active site" description="Proton donor" evidence="1">
    <location>
        <position position="75"/>
    </location>
</feature>
<feature type="active site" description="Proton acceptor" evidence="1">
    <location>
        <position position="226"/>
    </location>
</feature>
<feature type="binding site" evidence="1">
    <location>
        <position position="13"/>
    </location>
    <ligand>
        <name>substrate</name>
    </ligand>
</feature>
<feature type="binding site" evidence="1">
    <location>
        <position position="46"/>
    </location>
    <ligand>
        <name>substrate</name>
    </ligand>
</feature>
<feature type="binding site" evidence="1">
    <location>
        <position position="66"/>
    </location>
    <ligand>
        <name>substrate</name>
    </ligand>
</feature>
<feature type="binding site" evidence="1">
    <location>
        <begin position="76"/>
        <end position="77"/>
    </location>
    <ligand>
        <name>substrate</name>
    </ligand>
</feature>
<feature type="binding site" evidence="1">
    <location>
        <position position="166"/>
    </location>
    <ligand>
        <name>substrate</name>
    </ligand>
</feature>
<feature type="binding site" evidence="1">
    <location>
        <position position="199"/>
    </location>
    <ligand>
        <name>substrate</name>
    </ligand>
</feature>
<feature type="binding site" evidence="1">
    <location>
        <begin position="217"/>
        <end position="218"/>
    </location>
    <ligand>
        <name>substrate</name>
    </ligand>
</feature>
<feature type="binding site" evidence="1">
    <location>
        <begin position="227"/>
        <end position="228"/>
    </location>
    <ligand>
        <name>substrate</name>
    </ligand>
</feature>
<feature type="site" description="Could be important to modulate the pK values of the two catalytic cysteine residues" evidence="1">
    <location>
        <position position="168"/>
    </location>
</feature>
<feature type="site" description="Could be important to modulate the pK values of the two catalytic cysteine residues" evidence="1">
    <location>
        <position position="217"/>
    </location>
</feature>
<dbReference type="EC" id="5.1.1.7" evidence="1"/>
<dbReference type="EMBL" id="CU207211">
    <property type="protein sequence ID" value="CAL63067.2"/>
    <property type="molecule type" value="Genomic_DNA"/>
</dbReference>
<dbReference type="SMR" id="A4G980"/>
<dbReference type="STRING" id="204773.HEAR2955"/>
<dbReference type="KEGG" id="har:HEAR2955"/>
<dbReference type="eggNOG" id="COG0253">
    <property type="taxonomic scope" value="Bacteria"/>
</dbReference>
<dbReference type="HOGENOM" id="CLU_053306_1_1_4"/>
<dbReference type="OrthoDB" id="9805408at2"/>
<dbReference type="UniPathway" id="UPA00034">
    <property type="reaction ID" value="UER00025"/>
</dbReference>
<dbReference type="Proteomes" id="UP000006697">
    <property type="component" value="Chromosome"/>
</dbReference>
<dbReference type="GO" id="GO:0005829">
    <property type="term" value="C:cytosol"/>
    <property type="evidence" value="ECO:0007669"/>
    <property type="project" value="TreeGrafter"/>
</dbReference>
<dbReference type="GO" id="GO:0008837">
    <property type="term" value="F:diaminopimelate epimerase activity"/>
    <property type="evidence" value="ECO:0007669"/>
    <property type="project" value="UniProtKB-UniRule"/>
</dbReference>
<dbReference type="GO" id="GO:0009089">
    <property type="term" value="P:lysine biosynthetic process via diaminopimelate"/>
    <property type="evidence" value="ECO:0007669"/>
    <property type="project" value="UniProtKB-UniRule"/>
</dbReference>
<dbReference type="FunFam" id="3.10.310.10:FF:000001">
    <property type="entry name" value="Diaminopimelate epimerase"/>
    <property type="match status" value="1"/>
</dbReference>
<dbReference type="Gene3D" id="3.10.310.10">
    <property type="entry name" value="Diaminopimelate Epimerase, Chain A, domain 1"/>
    <property type="match status" value="2"/>
</dbReference>
<dbReference type="HAMAP" id="MF_00197">
    <property type="entry name" value="DAP_epimerase"/>
    <property type="match status" value="1"/>
</dbReference>
<dbReference type="InterPro" id="IPR018510">
    <property type="entry name" value="DAP_epimerase_AS"/>
</dbReference>
<dbReference type="InterPro" id="IPR001653">
    <property type="entry name" value="DAP_epimerase_DapF"/>
</dbReference>
<dbReference type="NCBIfam" id="TIGR00652">
    <property type="entry name" value="DapF"/>
    <property type="match status" value="1"/>
</dbReference>
<dbReference type="PANTHER" id="PTHR31689:SF0">
    <property type="entry name" value="DIAMINOPIMELATE EPIMERASE"/>
    <property type="match status" value="1"/>
</dbReference>
<dbReference type="PANTHER" id="PTHR31689">
    <property type="entry name" value="DIAMINOPIMELATE EPIMERASE, CHLOROPLASTIC"/>
    <property type="match status" value="1"/>
</dbReference>
<dbReference type="Pfam" id="PF01678">
    <property type="entry name" value="DAP_epimerase"/>
    <property type="match status" value="2"/>
</dbReference>
<dbReference type="SUPFAM" id="SSF54506">
    <property type="entry name" value="Diaminopimelate epimerase-like"/>
    <property type="match status" value="1"/>
</dbReference>
<dbReference type="PROSITE" id="PS01326">
    <property type="entry name" value="DAP_EPIMERASE"/>
    <property type="match status" value="1"/>
</dbReference>
<name>DAPF_HERAR</name>
<organism>
    <name type="scientific">Herminiimonas arsenicoxydans</name>
    <dbReference type="NCBI Taxonomy" id="204773"/>
    <lineage>
        <taxon>Bacteria</taxon>
        <taxon>Pseudomonadati</taxon>
        <taxon>Pseudomonadota</taxon>
        <taxon>Betaproteobacteria</taxon>
        <taxon>Burkholderiales</taxon>
        <taxon>Oxalobacteraceae</taxon>
        <taxon>Herminiimonas</taxon>
    </lineage>
</organism>
<gene>
    <name evidence="1" type="primary">dapF</name>
    <name type="ordered locus">HEAR2955</name>
</gene>
<accession>A4G980</accession>
<reference key="1">
    <citation type="journal article" date="2007" name="PLoS Genet.">
        <title>A tale of two oxidation states: bacterial colonization of arsenic-rich environments.</title>
        <authorList>
            <person name="Muller D."/>
            <person name="Medigue C."/>
            <person name="Koechler S."/>
            <person name="Barbe V."/>
            <person name="Barakat M."/>
            <person name="Talla E."/>
            <person name="Bonnefoy V."/>
            <person name="Krin E."/>
            <person name="Arsene-Ploetze F."/>
            <person name="Carapito C."/>
            <person name="Chandler M."/>
            <person name="Cournoyer B."/>
            <person name="Cruveiller S."/>
            <person name="Dossat C."/>
            <person name="Duval S."/>
            <person name="Heymann M."/>
            <person name="Leize E."/>
            <person name="Lieutaud A."/>
            <person name="Lievremont D."/>
            <person name="Makita Y."/>
            <person name="Mangenot S."/>
            <person name="Nitschke W."/>
            <person name="Ortet P."/>
            <person name="Perdrial N."/>
            <person name="Schoepp B."/>
            <person name="Siguier P."/>
            <person name="Simeonova D.D."/>
            <person name="Rouy Z."/>
            <person name="Segurens B."/>
            <person name="Turlin E."/>
            <person name="Vallenet D."/>
            <person name="van Dorsselaer A."/>
            <person name="Weiss S."/>
            <person name="Weissenbach J."/>
            <person name="Lett M.-C."/>
            <person name="Danchin A."/>
            <person name="Bertin P.N."/>
        </authorList>
    </citation>
    <scope>NUCLEOTIDE SEQUENCE [LARGE SCALE GENOMIC DNA]</scope>
    <source>
        <strain>ULPAs1</strain>
    </source>
</reference>
<proteinExistence type="inferred from homology"/>
<keyword id="KW-0028">Amino-acid biosynthesis</keyword>
<keyword id="KW-0963">Cytoplasm</keyword>
<keyword id="KW-0413">Isomerase</keyword>
<keyword id="KW-0457">Lysine biosynthesis</keyword>
<keyword id="KW-1185">Reference proteome</keyword>